<feature type="chain" id="PRO_1000094267" description="2-C-methyl-D-erythritol 2,4-cyclodiphosphate synthase">
    <location>
        <begin position="1"/>
        <end position="159"/>
    </location>
</feature>
<feature type="binding site" evidence="1">
    <location>
        <begin position="12"/>
        <end position="14"/>
    </location>
    <ligand>
        <name>4-CDP-2-C-methyl-D-erythritol 2-phosphate</name>
        <dbReference type="ChEBI" id="CHEBI:57919"/>
    </ligand>
</feature>
<feature type="binding site" evidence="1">
    <location>
        <position position="12"/>
    </location>
    <ligand>
        <name>a divalent metal cation</name>
        <dbReference type="ChEBI" id="CHEBI:60240"/>
    </ligand>
</feature>
<feature type="binding site" evidence="1">
    <location>
        <position position="14"/>
    </location>
    <ligand>
        <name>a divalent metal cation</name>
        <dbReference type="ChEBI" id="CHEBI:60240"/>
    </ligand>
</feature>
<feature type="binding site" evidence="1">
    <location>
        <begin position="39"/>
        <end position="40"/>
    </location>
    <ligand>
        <name>4-CDP-2-C-methyl-D-erythritol 2-phosphate</name>
        <dbReference type="ChEBI" id="CHEBI:57919"/>
    </ligand>
</feature>
<feature type="binding site" evidence="1">
    <location>
        <position position="47"/>
    </location>
    <ligand>
        <name>a divalent metal cation</name>
        <dbReference type="ChEBI" id="CHEBI:60240"/>
    </ligand>
</feature>
<feature type="binding site" evidence="1">
    <location>
        <begin position="61"/>
        <end position="63"/>
    </location>
    <ligand>
        <name>4-CDP-2-C-methyl-D-erythritol 2-phosphate</name>
        <dbReference type="ChEBI" id="CHEBI:57919"/>
    </ligand>
</feature>
<feature type="binding site" evidence="1">
    <location>
        <begin position="134"/>
        <end position="137"/>
    </location>
    <ligand>
        <name>4-CDP-2-C-methyl-D-erythritol 2-phosphate</name>
        <dbReference type="ChEBI" id="CHEBI:57919"/>
    </ligand>
</feature>
<feature type="binding site" evidence="1">
    <location>
        <position position="144"/>
    </location>
    <ligand>
        <name>4-CDP-2-C-methyl-D-erythritol 2-phosphate</name>
        <dbReference type="ChEBI" id="CHEBI:57919"/>
    </ligand>
</feature>
<feature type="site" description="Transition state stabilizer" evidence="1">
    <location>
        <position position="39"/>
    </location>
</feature>
<feature type="site" description="Transition state stabilizer" evidence="1">
    <location>
        <position position="135"/>
    </location>
</feature>
<comment type="function">
    <text evidence="1">Involved in the biosynthesis of isopentenyl diphosphate (IPP) and dimethylallyl diphosphate (DMAPP), two major building blocks of isoprenoid compounds. Catalyzes the conversion of 4-diphosphocytidyl-2-C-methyl-D-erythritol 2-phosphate (CDP-ME2P) to 2-C-methyl-D-erythritol 2,4-cyclodiphosphate (ME-CPP) with a corresponding release of cytidine 5-monophosphate (CMP).</text>
</comment>
<comment type="catalytic activity">
    <reaction evidence="1">
        <text>4-CDP-2-C-methyl-D-erythritol 2-phosphate = 2-C-methyl-D-erythritol 2,4-cyclic diphosphate + CMP</text>
        <dbReference type="Rhea" id="RHEA:23864"/>
        <dbReference type="ChEBI" id="CHEBI:57919"/>
        <dbReference type="ChEBI" id="CHEBI:58483"/>
        <dbReference type="ChEBI" id="CHEBI:60377"/>
        <dbReference type="EC" id="4.6.1.12"/>
    </reaction>
</comment>
<comment type="cofactor">
    <cofactor evidence="1">
        <name>a divalent metal cation</name>
        <dbReference type="ChEBI" id="CHEBI:60240"/>
    </cofactor>
    <text evidence="1">Binds 1 divalent metal cation per subunit.</text>
</comment>
<comment type="pathway">
    <text evidence="1">Isoprenoid biosynthesis; isopentenyl diphosphate biosynthesis via DXP pathway; isopentenyl diphosphate from 1-deoxy-D-xylulose 5-phosphate: step 4/6.</text>
</comment>
<comment type="subunit">
    <text evidence="1">Homotrimer.</text>
</comment>
<comment type="similarity">
    <text evidence="1">Belongs to the IspF family.</text>
</comment>
<protein>
    <recommendedName>
        <fullName evidence="1">2-C-methyl-D-erythritol 2,4-cyclodiphosphate synthase</fullName>
        <shortName evidence="1">MECDP-synthase</shortName>
        <shortName evidence="1">MECPP-synthase</shortName>
        <shortName evidence="1">MECPS</shortName>
        <ecNumber evidence="1">4.6.1.12</ecNumber>
    </recommendedName>
</protein>
<proteinExistence type="inferred from homology"/>
<evidence type="ECO:0000255" key="1">
    <source>
        <dbReference type="HAMAP-Rule" id="MF_00107"/>
    </source>
</evidence>
<reference key="1">
    <citation type="journal article" date="2008" name="PLoS ONE">
        <title>Survival in nuclear waste, extreme resistance, and potential applications gleaned from the genome sequence of Kineococcus radiotolerans SRS30216.</title>
        <authorList>
            <person name="Bagwell C.E."/>
            <person name="Bhat S."/>
            <person name="Hawkins G.M."/>
            <person name="Smith B.W."/>
            <person name="Biswas T."/>
            <person name="Hoover T.R."/>
            <person name="Saunders E."/>
            <person name="Han C.S."/>
            <person name="Tsodikov O.V."/>
            <person name="Shimkets L.J."/>
        </authorList>
    </citation>
    <scope>NUCLEOTIDE SEQUENCE [LARGE SCALE GENOMIC DNA]</scope>
    <source>
        <strain>ATCC BAA-149 / DSM 14245 / SRS30216</strain>
    </source>
</reference>
<dbReference type="EC" id="4.6.1.12" evidence="1"/>
<dbReference type="EMBL" id="CP000750">
    <property type="protein sequence ID" value="ABS02388.1"/>
    <property type="molecule type" value="Genomic_DNA"/>
</dbReference>
<dbReference type="RefSeq" id="WP_012084762.1">
    <property type="nucleotide sequence ID" value="NC_009664.2"/>
</dbReference>
<dbReference type="SMR" id="A6W6E9"/>
<dbReference type="STRING" id="266940.Krad_0900"/>
<dbReference type="KEGG" id="kra:Krad_0900"/>
<dbReference type="eggNOG" id="COG0245">
    <property type="taxonomic scope" value="Bacteria"/>
</dbReference>
<dbReference type="HOGENOM" id="CLU_084630_1_0_11"/>
<dbReference type="OrthoDB" id="9804336at2"/>
<dbReference type="UniPathway" id="UPA00056">
    <property type="reaction ID" value="UER00095"/>
</dbReference>
<dbReference type="Proteomes" id="UP000001116">
    <property type="component" value="Chromosome"/>
</dbReference>
<dbReference type="GO" id="GO:0008685">
    <property type="term" value="F:2-C-methyl-D-erythritol 2,4-cyclodiphosphate synthase activity"/>
    <property type="evidence" value="ECO:0007669"/>
    <property type="project" value="UniProtKB-UniRule"/>
</dbReference>
<dbReference type="GO" id="GO:0046872">
    <property type="term" value="F:metal ion binding"/>
    <property type="evidence" value="ECO:0007669"/>
    <property type="project" value="UniProtKB-KW"/>
</dbReference>
<dbReference type="GO" id="GO:0019288">
    <property type="term" value="P:isopentenyl diphosphate biosynthetic process, methylerythritol 4-phosphate pathway"/>
    <property type="evidence" value="ECO:0007669"/>
    <property type="project" value="UniProtKB-UniRule"/>
</dbReference>
<dbReference type="GO" id="GO:0016114">
    <property type="term" value="P:terpenoid biosynthetic process"/>
    <property type="evidence" value="ECO:0007669"/>
    <property type="project" value="InterPro"/>
</dbReference>
<dbReference type="CDD" id="cd00554">
    <property type="entry name" value="MECDP_synthase"/>
    <property type="match status" value="1"/>
</dbReference>
<dbReference type="FunFam" id="3.30.1330.50:FF:000003">
    <property type="entry name" value="2-C-methyl-D-erythritol 2,4-cyclodiphosphate synthase"/>
    <property type="match status" value="1"/>
</dbReference>
<dbReference type="Gene3D" id="3.30.1330.50">
    <property type="entry name" value="2-C-methyl-D-erythritol 2,4-cyclodiphosphate synthase"/>
    <property type="match status" value="1"/>
</dbReference>
<dbReference type="HAMAP" id="MF_00107">
    <property type="entry name" value="IspF"/>
    <property type="match status" value="1"/>
</dbReference>
<dbReference type="InterPro" id="IPR003526">
    <property type="entry name" value="MECDP_synthase"/>
</dbReference>
<dbReference type="InterPro" id="IPR020555">
    <property type="entry name" value="MECDP_synthase_CS"/>
</dbReference>
<dbReference type="InterPro" id="IPR036571">
    <property type="entry name" value="MECDP_synthase_sf"/>
</dbReference>
<dbReference type="NCBIfam" id="TIGR00151">
    <property type="entry name" value="ispF"/>
    <property type="match status" value="1"/>
</dbReference>
<dbReference type="PANTHER" id="PTHR43181">
    <property type="entry name" value="2-C-METHYL-D-ERYTHRITOL 2,4-CYCLODIPHOSPHATE SYNTHASE, CHLOROPLASTIC"/>
    <property type="match status" value="1"/>
</dbReference>
<dbReference type="PANTHER" id="PTHR43181:SF1">
    <property type="entry name" value="2-C-METHYL-D-ERYTHRITOL 2,4-CYCLODIPHOSPHATE SYNTHASE, CHLOROPLASTIC"/>
    <property type="match status" value="1"/>
</dbReference>
<dbReference type="Pfam" id="PF02542">
    <property type="entry name" value="YgbB"/>
    <property type="match status" value="1"/>
</dbReference>
<dbReference type="SUPFAM" id="SSF69765">
    <property type="entry name" value="IpsF-like"/>
    <property type="match status" value="1"/>
</dbReference>
<dbReference type="PROSITE" id="PS01350">
    <property type="entry name" value="ISPF"/>
    <property type="match status" value="1"/>
</dbReference>
<organism>
    <name type="scientific">Kineococcus radiotolerans (strain ATCC BAA-149 / DSM 14245 / SRS30216)</name>
    <dbReference type="NCBI Taxonomy" id="266940"/>
    <lineage>
        <taxon>Bacteria</taxon>
        <taxon>Bacillati</taxon>
        <taxon>Actinomycetota</taxon>
        <taxon>Actinomycetes</taxon>
        <taxon>Kineosporiales</taxon>
        <taxon>Kineosporiaceae</taxon>
        <taxon>Kineococcus</taxon>
    </lineage>
</organism>
<name>ISPF_KINRD</name>
<gene>
    <name evidence="1" type="primary">ispF</name>
    <name type="ordered locus">Krad_0900</name>
</gene>
<sequence length="159" mass="15816">MSGLPRVGTGVDVHQLVAGRPCWVAGLLWEGEAAGPEGHSDGDVAAHACCDALFAAAGLGDLGAHFGTARPEFAGASGARLLAEAARLVREAGFEIGNVSVQVVGNRPKVGRRRAEAQAALSRACGAPVSVAGTTTDALGLTGRGEGIAAIATALVVPR</sequence>
<keyword id="KW-0414">Isoprene biosynthesis</keyword>
<keyword id="KW-0456">Lyase</keyword>
<keyword id="KW-0479">Metal-binding</keyword>
<keyword id="KW-1185">Reference proteome</keyword>
<accession>A6W6E9</accession>